<accession>Q8SWM6</accession>
<comment type="function">
    <text evidence="1">Protein kinase required for the cell cycle where it is involved in mitotic exit. Required to form a bipolar spindle, the actin ring and septum. Functions upstream of the whole septum formation pathway, including actin ring formation (regulated by late septation genes) and septal material deposition (regulated by early septation genes). Behaves as a 'septum-promoting factor', and could also be involved in inducing other late events of cell division (By similarity).</text>
</comment>
<comment type="catalytic activity">
    <reaction>
        <text>L-seryl-[protein] + ATP = O-phospho-L-seryl-[protein] + ADP + H(+)</text>
        <dbReference type="Rhea" id="RHEA:17989"/>
        <dbReference type="Rhea" id="RHEA-COMP:9863"/>
        <dbReference type="Rhea" id="RHEA-COMP:11604"/>
        <dbReference type="ChEBI" id="CHEBI:15378"/>
        <dbReference type="ChEBI" id="CHEBI:29999"/>
        <dbReference type="ChEBI" id="CHEBI:30616"/>
        <dbReference type="ChEBI" id="CHEBI:83421"/>
        <dbReference type="ChEBI" id="CHEBI:456216"/>
        <dbReference type="EC" id="2.7.11.21"/>
    </reaction>
</comment>
<comment type="catalytic activity">
    <reaction>
        <text>L-threonyl-[protein] + ATP = O-phospho-L-threonyl-[protein] + ADP + H(+)</text>
        <dbReference type="Rhea" id="RHEA:46608"/>
        <dbReference type="Rhea" id="RHEA-COMP:11060"/>
        <dbReference type="Rhea" id="RHEA-COMP:11605"/>
        <dbReference type="ChEBI" id="CHEBI:15378"/>
        <dbReference type="ChEBI" id="CHEBI:30013"/>
        <dbReference type="ChEBI" id="CHEBI:30616"/>
        <dbReference type="ChEBI" id="CHEBI:61977"/>
        <dbReference type="ChEBI" id="CHEBI:456216"/>
        <dbReference type="EC" id="2.7.11.21"/>
    </reaction>
</comment>
<comment type="subcellular location">
    <subcellularLocation>
        <location evidence="1">Cytoplasm</location>
        <location evidence="1">Cytoskeleton</location>
        <location evidence="1">Microtubule organizing center</location>
        <location evidence="1">Spindle pole body</location>
    </subcellularLocation>
</comment>
<comment type="similarity">
    <text evidence="3">Belongs to the protein kinase superfamily. Ser/Thr protein kinase family. CDC5/Polo subfamily.</text>
</comment>
<proteinExistence type="inferred from homology"/>
<feature type="chain" id="PRO_0000384418" description="Probable cell cycle serine/threonine-protein kinase CDC5 homolog">
    <location>
        <begin position="1"/>
        <end position="472"/>
    </location>
</feature>
<feature type="domain" description="Protein kinase" evidence="3">
    <location>
        <begin position="24"/>
        <end position="279"/>
    </location>
</feature>
<feature type="domain" description="POLO box" evidence="2">
    <location>
        <begin position="307"/>
        <end position="392"/>
    </location>
</feature>
<feature type="active site" description="Proton acceptor" evidence="3 4">
    <location>
        <position position="147"/>
    </location>
</feature>
<feature type="binding site" evidence="3">
    <location>
        <begin position="30"/>
        <end position="38"/>
    </location>
    <ligand>
        <name>ATP</name>
        <dbReference type="ChEBI" id="CHEBI:30616"/>
    </ligand>
</feature>
<feature type="binding site" evidence="3">
    <location>
        <position position="52"/>
    </location>
    <ligand>
        <name>ATP</name>
        <dbReference type="ChEBI" id="CHEBI:30616"/>
    </ligand>
</feature>
<name>CDC5_ENCCU</name>
<protein>
    <recommendedName>
        <fullName>Probable cell cycle serine/threonine-protein kinase CDC5 homolog</fullName>
        <ecNumber>2.7.11.21</ecNumber>
    </recommendedName>
</protein>
<evidence type="ECO:0000250" key="1"/>
<evidence type="ECO:0000255" key="2">
    <source>
        <dbReference type="PROSITE-ProRule" id="PRU00154"/>
    </source>
</evidence>
<evidence type="ECO:0000255" key="3">
    <source>
        <dbReference type="PROSITE-ProRule" id="PRU00159"/>
    </source>
</evidence>
<evidence type="ECO:0000255" key="4">
    <source>
        <dbReference type="PROSITE-ProRule" id="PRU10027"/>
    </source>
</evidence>
<keyword id="KW-0067">ATP-binding</keyword>
<keyword id="KW-0131">Cell cycle</keyword>
<keyword id="KW-0132">Cell division</keyword>
<keyword id="KW-0963">Cytoplasm</keyword>
<keyword id="KW-0206">Cytoskeleton</keyword>
<keyword id="KW-0418">Kinase</keyword>
<keyword id="KW-0498">Mitosis</keyword>
<keyword id="KW-0547">Nucleotide-binding</keyword>
<keyword id="KW-1185">Reference proteome</keyword>
<keyword id="KW-0723">Serine/threonine-protein kinase</keyword>
<keyword id="KW-0808">Transferase</keyword>
<reference key="1">
    <citation type="journal article" date="2001" name="Genome Res.">
        <title>Sequence and analysis of chromosome I of the amitochondriate intracellular parasite Encephalitozoon cuniculi (Microspora).</title>
        <authorList>
            <person name="Peyret P."/>
            <person name="Katinka M.D."/>
            <person name="Duprat S."/>
            <person name="Duffieux F."/>
            <person name="Barbe V."/>
            <person name="Barbazanges M."/>
            <person name="Weissenbach J."/>
            <person name="Saurin W."/>
            <person name="Vivares C.P."/>
        </authorList>
    </citation>
    <scope>NUCLEOTIDE SEQUENCE [LARGE SCALE GENOMIC DNA]</scope>
    <source>
        <strain>GB-M1</strain>
    </source>
</reference>
<reference key="2">
    <citation type="journal article" date="2001" name="Nature">
        <title>Genome sequence and gene compaction of the eukaryote parasite Encephalitozoon cuniculi.</title>
        <authorList>
            <person name="Katinka M.D."/>
            <person name="Duprat S."/>
            <person name="Cornillot E."/>
            <person name="Metenier G."/>
            <person name="Thomarat F."/>
            <person name="Prensier G."/>
            <person name="Barbe V."/>
            <person name="Peyretaillade E."/>
            <person name="Brottier P."/>
            <person name="Wincker P."/>
            <person name="Delbac F."/>
            <person name="El Alaoui H."/>
            <person name="Peyret P."/>
            <person name="Saurin W."/>
            <person name="Gouy M."/>
            <person name="Weissenbach J."/>
            <person name="Vivares C.P."/>
        </authorList>
    </citation>
    <scope>NUCLEOTIDE SEQUENCE [LARGE SCALE GENOMIC DNA]</scope>
    <source>
        <strain>GB-M1</strain>
    </source>
</reference>
<reference key="3">
    <citation type="journal article" date="2009" name="BMC Genomics">
        <title>Identification of transcriptional signals in Encephalitozoon cuniculi widespread among Microsporidia phylum: support for accurate structural genome annotation.</title>
        <authorList>
            <person name="Peyretaillade E."/>
            <person name="Goncalves O."/>
            <person name="Terrat S."/>
            <person name="Dugat-Bony E."/>
            <person name="Wincker P."/>
            <person name="Cornman R.S."/>
            <person name="Evans J.D."/>
            <person name="Delbac F."/>
            <person name="Peyret P."/>
        </authorList>
    </citation>
    <scope>GENOME REANNOTATION</scope>
    <source>
        <strain>GB-M1</strain>
    </source>
</reference>
<reference key="4">
    <citation type="journal article" date="2007" name="BMC Genomics">
        <title>The complement of protein kinases of the microsporidium Encephalitozoon cuniculi in relation to those of Saccharomyces cerevisiae and Schizosaccharomyces pombe.</title>
        <authorList>
            <person name="Miranda-Saavedra D."/>
            <person name="Stark M.J.R."/>
            <person name="Packer J.C."/>
            <person name="Vivares C.P."/>
            <person name="Doerig C."/>
            <person name="Barton G.J."/>
        </authorList>
    </citation>
    <scope>PREDICTION OF FUNCTION</scope>
</reference>
<dbReference type="EC" id="2.7.11.21"/>
<dbReference type="EMBL" id="AL391737">
    <property type="protein sequence ID" value="CAD24933.2"/>
    <property type="molecule type" value="Genomic_DNA"/>
</dbReference>
<dbReference type="RefSeq" id="XP_965898.1">
    <property type="nucleotide sequence ID" value="XM_960805.1"/>
</dbReference>
<dbReference type="SMR" id="Q8SWM6"/>
<dbReference type="FunCoup" id="Q8SWM6">
    <property type="interactions" value="57"/>
</dbReference>
<dbReference type="STRING" id="284813.Q8SWM6"/>
<dbReference type="VEuPathDB" id="MicrosporidiaDB:ECU01_0630"/>
<dbReference type="HOGENOM" id="CLU_000288_46_1_1"/>
<dbReference type="InParanoid" id="Q8SWM6"/>
<dbReference type="OrthoDB" id="408964at2759"/>
<dbReference type="Proteomes" id="UP000000819">
    <property type="component" value="Chromosome I"/>
</dbReference>
<dbReference type="GO" id="GO:0005737">
    <property type="term" value="C:cytoplasm"/>
    <property type="evidence" value="ECO:0007669"/>
    <property type="project" value="UniProtKB-KW"/>
</dbReference>
<dbReference type="GO" id="GO:0005634">
    <property type="term" value="C:nucleus"/>
    <property type="evidence" value="ECO:0007669"/>
    <property type="project" value="TreeGrafter"/>
</dbReference>
<dbReference type="GO" id="GO:0005816">
    <property type="term" value="C:spindle pole body"/>
    <property type="evidence" value="ECO:0007669"/>
    <property type="project" value="UniProtKB-SubCell"/>
</dbReference>
<dbReference type="GO" id="GO:0005524">
    <property type="term" value="F:ATP binding"/>
    <property type="evidence" value="ECO:0007669"/>
    <property type="project" value="UniProtKB-KW"/>
</dbReference>
<dbReference type="GO" id="GO:0106310">
    <property type="term" value="F:protein serine kinase activity"/>
    <property type="evidence" value="ECO:0007669"/>
    <property type="project" value="RHEA"/>
</dbReference>
<dbReference type="GO" id="GO:0004674">
    <property type="term" value="F:protein serine/threonine kinase activity"/>
    <property type="evidence" value="ECO:0007669"/>
    <property type="project" value="UniProtKB-KW"/>
</dbReference>
<dbReference type="GO" id="GO:0051301">
    <property type="term" value="P:cell division"/>
    <property type="evidence" value="ECO:0007669"/>
    <property type="project" value="UniProtKB-KW"/>
</dbReference>
<dbReference type="CDD" id="cd14099">
    <property type="entry name" value="STKc_PLK"/>
    <property type="match status" value="1"/>
</dbReference>
<dbReference type="FunFam" id="3.30.200.20:FF:000042">
    <property type="entry name" value="Aurora kinase A"/>
    <property type="match status" value="1"/>
</dbReference>
<dbReference type="FunFam" id="1.10.510.10:FF:000571">
    <property type="entry name" value="Maternal embryonic leucine zipper kinase"/>
    <property type="match status" value="1"/>
</dbReference>
<dbReference type="Gene3D" id="3.30.1120.30">
    <property type="entry name" value="POLO box domain"/>
    <property type="match status" value="1"/>
</dbReference>
<dbReference type="Gene3D" id="1.10.510.10">
    <property type="entry name" value="Transferase(Phosphotransferase) domain 1"/>
    <property type="match status" value="1"/>
</dbReference>
<dbReference type="InterPro" id="IPR011009">
    <property type="entry name" value="Kinase-like_dom_sf"/>
</dbReference>
<dbReference type="InterPro" id="IPR000959">
    <property type="entry name" value="POLO_box_dom"/>
</dbReference>
<dbReference type="InterPro" id="IPR036947">
    <property type="entry name" value="POLO_box_dom_sf"/>
</dbReference>
<dbReference type="InterPro" id="IPR000719">
    <property type="entry name" value="Prot_kinase_dom"/>
</dbReference>
<dbReference type="InterPro" id="IPR017441">
    <property type="entry name" value="Protein_kinase_ATP_BS"/>
</dbReference>
<dbReference type="InterPro" id="IPR008271">
    <property type="entry name" value="Ser/Thr_kinase_AS"/>
</dbReference>
<dbReference type="PANTHER" id="PTHR24345">
    <property type="entry name" value="SERINE/THREONINE-PROTEIN KINASE PLK"/>
    <property type="match status" value="1"/>
</dbReference>
<dbReference type="Pfam" id="PF00069">
    <property type="entry name" value="Pkinase"/>
    <property type="match status" value="1"/>
</dbReference>
<dbReference type="Pfam" id="PF00659">
    <property type="entry name" value="POLO_box"/>
    <property type="match status" value="1"/>
</dbReference>
<dbReference type="SMART" id="SM00220">
    <property type="entry name" value="S_TKc"/>
    <property type="match status" value="1"/>
</dbReference>
<dbReference type="SUPFAM" id="SSF82615">
    <property type="entry name" value="Polo-box domain"/>
    <property type="match status" value="1"/>
</dbReference>
<dbReference type="SUPFAM" id="SSF56112">
    <property type="entry name" value="Protein kinase-like (PK-like)"/>
    <property type="match status" value="1"/>
</dbReference>
<dbReference type="PROSITE" id="PS50078">
    <property type="entry name" value="POLO_BOX"/>
    <property type="match status" value="1"/>
</dbReference>
<dbReference type="PROSITE" id="PS00107">
    <property type="entry name" value="PROTEIN_KINASE_ATP"/>
    <property type="match status" value="1"/>
</dbReference>
<dbReference type="PROSITE" id="PS50011">
    <property type="entry name" value="PROTEIN_KINASE_DOM"/>
    <property type="match status" value="1"/>
</dbReference>
<dbReference type="PROSITE" id="PS00108">
    <property type="entry name" value="PROTEIN_KINASE_ST"/>
    <property type="match status" value="1"/>
</dbReference>
<organism>
    <name type="scientific">Encephalitozoon cuniculi (strain GB-M1)</name>
    <name type="common">Microsporidian parasite</name>
    <dbReference type="NCBI Taxonomy" id="284813"/>
    <lineage>
        <taxon>Eukaryota</taxon>
        <taxon>Fungi</taxon>
        <taxon>Fungi incertae sedis</taxon>
        <taxon>Microsporidia</taxon>
        <taxon>Unikaryonidae</taxon>
        <taxon>Encephalitozoon</taxon>
    </lineage>
</organism>
<sequence>MSTKVELYMEIGTVITDLEYHTKYMLKKLLGRGAYAQCYLAEIESGEQYAMKVVRLKDIKSRKVHEKLESEIAIHSKLDNPNVVKMYRSFRSSEYVFMVLELCERGALDALLKRNGKLKERHVARFVKQTVEGLIYLHNSVSVVHRDLKLGNLFLDSKFNVKIGDFGLSAVIKDGEKKVTMCGTPNYIAPEVLFGKASGHSFEADIWSLGVIIYTLLVGVPPFQKKNVEDIYKMIKLNNYIFPENCDLSSEAIDLITQILNTNPLERPTLEHILSHKFLSKKEHFLMKIYRNLMTNRTEEGVVDTDYVLFSIPVTKLRGVGYVLKSGVYGIYFSDHRNLMLKPNRKSVIYLNSTIESGKRVFYKEEHLVEKIPAEIAESYKGLQYFIRTFDNGFSFLDVEPCFIVKIRKIECGFLFVMADSTIVFDFVDGWRVVLSRCGERVSCYNGLGLASFNQEIRGRCIEILRGCLGCG</sequence>
<gene>
    <name type="primary">CDC5</name>
    <name type="ordered locus">ECU01_0630</name>
</gene>